<proteinExistence type="inferred from homology"/>
<sequence length="212" mass="23459">MTSQRTRERLIQRLCEEGVSNPKVLDAIRRTPRHLFVDEALAHRAYEDTALPIGHNQTISQPFMVAHMSELLLEAGPLDKVLEIGTGSGYQTAILAQLVERVFSVERIKVLQDRAKERLVELNLRNVVFRWGDGCDGWQALAPYNGIIVTAVAPEVPQALLDQLAPGGRMVIPVGPAGEVQQLMLIVREEQGFSRRVLGAVRFVPLLNGPVA</sequence>
<name>PIMT_PSEPW</name>
<gene>
    <name evidence="1" type="primary">pcm</name>
    <name type="ordered locus">PputW619_4054</name>
</gene>
<comment type="function">
    <text evidence="1">Catalyzes the methyl esterification of L-isoaspartyl residues in peptides and proteins that result from spontaneous decomposition of normal L-aspartyl and L-asparaginyl residues. It plays a role in the repair and/or degradation of damaged proteins.</text>
</comment>
<comment type="catalytic activity">
    <reaction evidence="1">
        <text>[protein]-L-isoaspartate + S-adenosyl-L-methionine = [protein]-L-isoaspartate alpha-methyl ester + S-adenosyl-L-homocysteine</text>
        <dbReference type="Rhea" id="RHEA:12705"/>
        <dbReference type="Rhea" id="RHEA-COMP:12143"/>
        <dbReference type="Rhea" id="RHEA-COMP:12144"/>
        <dbReference type="ChEBI" id="CHEBI:57856"/>
        <dbReference type="ChEBI" id="CHEBI:59789"/>
        <dbReference type="ChEBI" id="CHEBI:90596"/>
        <dbReference type="ChEBI" id="CHEBI:90598"/>
        <dbReference type="EC" id="2.1.1.77"/>
    </reaction>
</comment>
<comment type="subcellular location">
    <subcellularLocation>
        <location evidence="1">Cytoplasm</location>
    </subcellularLocation>
</comment>
<comment type="similarity">
    <text evidence="1">Belongs to the methyltransferase superfamily. L-isoaspartyl/D-aspartyl protein methyltransferase family.</text>
</comment>
<comment type="sequence caution" evidence="2">
    <conflict type="erroneous initiation">
        <sequence resource="EMBL-CDS" id="ACA74534"/>
    </conflict>
</comment>
<accession>B1JB29</accession>
<reference key="1">
    <citation type="submission" date="2008-02" db="EMBL/GenBank/DDBJ databases">
        <title>Complete sequence of Pseudomonas putida W619.</title>
        <authorList>
            <person name="Copeland A."/>
            <person name="Lucas S."/>
            <person name="Lapidus A."/>
            <person name="Barry K."/>
            <person name="Detter J.C."/>
            <person name="Glavina del Rio T."/>
            <person name="Dalin E."/>
            <person name="Tice H."/>
            <person name="Pitluck S."/>
            <person name="Chain P."/>
            <person name="Malfatti S."/>
            <person name="Shin M."/>
            <person name="Vergez L."/>
            <person name="Schmutz J."/>
            <person name="Larimer F."/>
            <person name="Land M."/>
            <person name="Hauser L."/>
            <person name="Kyrpides N."/>
            <person name="Kim E."/>
            <person name="Taghavi S."/>
            <person name="Vangronsveld D."/>
            <person name="van der Lelie D."/>
            <person name="Richardson P."/>
        </authorList>
    </citation>
    <scope>NUCLEOTIDE SEQUENCE [LARGE SCALE GENOMIC DNA]</scope>
    <source>
        <strain>W619</strain>
    </source>
</reference>
<feature type="chain" id="PRO_0000351912" description="Protein-L-isoaspartate O-methyltransferase">
    <location>
        <begin position="1"/>
        <end position="212"/>
    </location>
</feature>
<feature type="active site" evidence="1">
    <location>
        <position position="60"/>
    </location>
</feature>
<protein>
    <recommendedName>
        <fullName evidence="1">Protein-L-isoaspartate O-methyltransferase</fullName>
        <ecNumber evidence="1">2.1.1.77</ecNumber>
    </recommendedName>
    <alternativeName>
        <fullName evidence="1">L-isoaspartyl protein carboxyl methyltransferase</fullName>
    </alternativeName>
    <alternativeName>
        <fullName evidence="1">Protein L-isoaspartyl methyltransferase</fullName>
    </alternativeName>
    <alternativeName>
        <fullName evidence="1">Protein-beta-aspartate methyltransferase</fullName>
        <shortName evidence="1">PIMT</shortName>
    </alternativeName>
</protein>
<dbReference type="EC" id="2.1.1.77" evidence="1"/>
<dbReference type="EMBL" id="CP000949">
    <property type="protein sequence ID" value="ACA74534.1"/>
    <property type="status" value="ALT_INIT"/>
    <property type="molecule type" value="Genomic_DNA"/>
</dbReference>
<dbReference type="SMR" id="B1JB29"/>
<dbReference type="STRING" id="390235.PputW619_4054"/>
<dbReference type="KEGG" id="ppw:PputW619_4054"/>
<dbReference type="eggNOG" id="COG2518">
    <property type="taxonomic scope" value="Bacteria"/>
</dbReference>
<dbReference type="HOGENOM" id="CLU_055432_2_0_6"/>
<dbReference type="GO" id="GO:0005737">
    <property type="term" value="C:cytoplasm"/>
    <property type="evidence" value="ECO:0007669"/>
    <property type="project" value="UniProtKB-SubCell"/>
</dbReference>
<dbReference type="GO" id="GO:0004719">
    <property type="term" value="F:protein-L-isoaspartate (D-aspartate) O-methyltransferase activity"/>
    <property type="evidence" value="ECO:0007669"/>
    <property type="project" value="UniProtKB-UniRule"/>
</dbReference>
<dbReference type="GO" id="GO:0032259">
    <property type="term" value="P:methylation"/>
    <property type="evidence" value="ECO:0007669"/>
    <property type="project" value="UniProtKB-KW"/>
</dbReference>
<dbReference type="GO" id="GO:0036211">
    <property type="term" value="P:protein modification process"/>
    <property type="evidence" value="ECO:0007669"/>
    <property type="project" value="UniProtKB-UniRule"/>
</dbReference>
<dbReference type="GO" id="GO:0030091">
    <property type="term" value="P:protein repair"/>
    <property type="evidence" value="ECO:0007669"/>
    <property type="project" value="UniProtKB-UniRule"/>
</dbReference>
<dbReference type="CDD" id="cd02440">
    <property type="entry name" value="AdoMet_MTases"/>
    <property type="match status" value="1"/>
</dbReference>
<dbReference type="FunFam" id="3.40.50.150:FF:000010">
    <property type="entry name" value="Protein-L-isoaspartate O-methyltransferase"/>
    <property type="match status" value="1"/>
</dbReference>
<dbReference type="Gene3D" id="3.40.50.150">
    <property type="entry name" value="Vaccinia Virus protein VP39"/>
    <property type="match status" value="1"/>
</dbReference>
<dbReference type="HAMAP" id="MF_00090">
    <property type="entry name" value="PIMT"/>
    <property type="match status" value="1"/>
</dbReference>
<dbReference type="InterPro" id="IPR000682">
    <property type="entry name" value="PCMT"/>
</dbReference>
<dbReference type="InterPro" id="IPR029063">
    <property type="entry name" value="SAM-dependent_MTases_sf"/>
</dbReference>
<dbReference type="NCBIfam" id="TIGR00080">
    <property type="entry name" value="pimt"/>
    <property type="match status" value="1"/>
</dbReference>
<dbReference type="NCBIfam" id="NF001453">
    <property type="entry name" value="PRK00312.1"/>
    <property type="match status" value="1"/>
</dbReference>
<dbReference type="PANTHER" id="PTHR11579">
    <property type="entry name" value="PROTEIN-L-ISOASPARTATE O-METHYLTRANSFERASE"/>
    <property type="match status" value="1"/>
</dbReference>
<dbReference type="PANTHER" id="PTHR11579:SF0">
    <property type="entry name" value="PROTEIN-L-ISOASPARTATE(D-ASPARTATE) O-METHYLTRANSFERASE"/>
    <property type="match status" value="1"/>
</dbReference>
<dbReference type="Pfam" id="PF01135">
    <property type="entry name" value="PCMT"/>
    <property type="match status" value="1"/>
</dbReference>
<dbReference type="SUPFAM" id="SSF53335">
    <property type="entry name" value="S-adenosyl-L-methionine-dependent methyltransferases"/>
    <property type="match status" value="1"/>
</dbReference>
<dbReference type="PROSITE" id="PS01279">
    <property type="entry name" value="PCMT"/>
    <property type="match status" value="1"/>
</dbReference>
<keyword id="KW-0963">Cytoplasm</keyword>
<keyword id="KW-0489">Methyltransferase</keyword>
<keyword id="KW-0949">S-adenosyl-L-methionine</keyword>
<keyword id="KW-0808">Transferase</keyword>
<evidence type="ECO:0000255" key="1">
    <source>
        <dbReference type="HAMAP-Rule" id="MF_00090"/>
    </source>
</evidence>
<evidence type="ECO:0000305" key="2"/>
<organism>
    <name type="scientific">Pseudomonas putida (strain W619)</name>
    <dbReference type="NCBI Taxonomy" id="390235"/>
    <lineage>
        <taxon>Bacteria</taxon>
        <taxon>Pseudomonadati</taxon>
        <taxon>Pseudomonadota</taxon>
        <taxon>Gammaproteobacteria</taxon>
        <taxon>Pseudomonadales</taxon>
        <taxon>Pseudomonadaceae</taxon>
        <taxon>Pseudomonas</taxon>
    </lineage>
</organism>